<accession>Q6G7N4</accession>
<name>KDPC_STAAS</name>
<dbReference type="EMBL" id="BX571857">
    <property type="protein sequence ID" value="CAG43787.1"/>
    <property type="molecule type" value="Genomic_DNA"/>
</dbReference>
<dbReference type="RefSeq" id="WP_001092409.1">
    <property type="nucleotide sequence ID" value="NC_002953.3"/>
</dbReference>
<dbReference type="SMR" id="Q6G7N4"/>
<dbReference type="KEGG" id="sas:SAS1980"/>
<dbReference type="HOGENOM" id="CLU_077094_2_0_9"/>
<dbReference type="GO" id="GO:0005886">
    <property type="term" value="C:plasma membrane"/>
    <property type="evidence" value="ECO:0007669"/>
    <property type="project" value="UniProtKB-SubCell"/>
</dbReference>
<dbReference type="GO" id="GO:0005524">
    <property type="term" value="F:ATP binding"/>
    <property type="evidence" value="ECO:0007669"/>
    <property type="project" value="UniProtKB-UniRule"/>
</dbReference>
<dbReference type="GO" id="GO:0008556">
    <property type="term" value="F:P-type potassium transmembrane transporter activity"/>
    <property type="evidence" value="ECO:0007669"/>
    <property type="project" value="InterPro"/>
</dbReference>
<dbReference type="HAMAP" id="MF_00276">
    <property type="entry name" value="KdpC"/>
    <property type="match status" value="1"/>
</dbReference>
<dbReference type="InterPro" id="IPR003820">
    <property type="entry name" value="KdpC"/>
</dbReference>
<dbReference type="NCBIfam" id="TIGR00681">
    <property type="entry name" value="kdpC"/>
    <property type="match status" value="1"/>
</dbReference>
<dbReference type="NCBIfam" id="NF010602">
    <property type="entry name" value="PRK13998.1"/>
    <property type="match status" value="1"/>
</dbReference>
<dbReference type="PANTHER" id="PTHR30042">
    <property type="entry name" value="POTASSIUM-TRANSPORTING ATPASE C CHAIN"/>
    <property type="match status" value="1"/>
</dbReference>
<dbReference type="PANTHER" id="PTHR30042:SF2">
    <property type="entry name" value="POTASSIUM-TRANSPORTING ATPASE KDPC SUBUNIT"/>
    <property type="match status" value="1"/>
</dbReference>
<dbReference type="Pfam" id="PF02669">
    <property type="entry name" value="KdpC"/>
    <property type="match status" value="1"/>
</dbReference>
<dbReference type="PIRSF" id="PIRSF001296">
    <property type="entry name" value="K_ATPase_KdpC"/>
    <property type="match status" value="1"/>
</dbReference>
<gene>
    <name evidence="1" type="primary">kdpC</name>
    <name type="ordered locus">SAS1980</name>
</gene>
<proteinExistence type="inferred from homology"/>
<reference key="1">
    <citation type="journal article" date="2004" name="Proc. Natl. Acad. Sci. U.S.A.">
        <title>Complete genomes of two clinical Staphylococcus aureus strains: evidence for the rapid evolution of virulence and drug resistance.</title>
        <authorList>
            <person name="Holden M.T.G."/>
            <person name="Feil E.J."/>
            <person name="Lindsay J.A."/>
            <person name="Peacock S.J."/>
            <person name="Day N.P.J."/>
            <person name="Enright M.C."/>
            <person name="Foster T.J."/>
            <person name="Moore C.E."/>
            <person name="Hurst L."/>
            <person name="Atkin R."/>
            <person name="Barron A."/>
            <person name="Bason N."/>
            <person name="Bentley S.D."/>
            <person name="Chillingworth C."/>
            <person name="Chillingworth T."/>
            <person name="Churcher C."/>
            <person name="Clark L."/>
            <person name="Corton C."/>
            <person name="Cronin A."/>
            <person name="Doggett J."/>
            <person name="Dowd L."/>
            <person name="Feltwell T."/>
            <person name="Hance Z."/>
            <person name="Harris B."/>
            <person name="Hauser H."/>
            <person name="Holroyd S."/>
            <person name="Jagels K."/>
            <person name="James K.D."/>
            <person name="Lennard N."/>
            <person name="Line A."/>
            <person name="Mayes R."/>
            <person name="Moule S."/>
            <person name="Mungall K."/>
            <person name="Ormond D."/>
            <person name="Quail M.A."/>
            <person name="Rabbinowitsch E."/>
            <person name="Rutherford K.M."/>
            <person name="Sanders M."/>
            <person name="Sharp S."/>
            <person name="Simmonds M."/>
            <person name="Stevens K."/>
            <person name="Whitehead S."/>
            <person name="Barrell B.G."/>
            <person name="Spratt B.G."/>
            <person name="Parkhill J."/>
        </authorList>
    </citation>
    <scope>NUCLEOTIDE SEQUENCE [LARGE SCALE GENOMIC DNA]</scope>
    <source>
        <strain>MSSA476</strain>
    </source>
</reference>
<feature type="chain" id="PRO_0000197012" description="Potassium-transporting ATPase KdpC subunit">
    <location>
        <begin position="1"/>
        <end position="186"/>
    </location>
</feature>
<feature type="transmembrane region" description="Helical" evidence="1">
    <location>
        <begin position="10"/>
        <end position="30"/>
    </location>
</feature>
<sequence>MNTIRNSICLTIITMVLCGFLFPLAITLIGQIFFYQQANGSLITYDNRIVGSKLIGQHWTETRYFHGRPSAVDYNMNPEKLYKNGVSSGGSNESNGNTELIARMKHHVKFGNSNVTIDAATSSGSGLDPHITVENALKQAPRIADARHISTSRVADLIQHRKQRGVLTNDYVNVLELNIALDKMKD</sequence>
<comment type="function">
    <text evidence="1">Part of the high-affinity ATP-driven potassium transport (or Kdp) system, which catalyzes the hydrolysis of ATP coupled with the electrogenic transport of potassium into the cytoplasm. This subunit acts as a catalytic chaperone that increases the ATP-binding affinity of the ATP-hydrolyzing subunit KdpB by the formation of a transient KdpB/KdpC/ATP ternary complex.</text>
</comment>
<comment type="subunit">
    <text evidence="1">The system is composed of three essential subunits: KdpA, KdpB and KdpC.</text>
</comment>
<comment type="subcellular location">
    <subcellularLocation>
        <location evidence="1">Cell membrane</location>
        <topology evidence="1">Single-pass membrane protein</topology>
    </subcellularLocation>
</comment>
<comment type="similarity">
    <text evidence="1">Belongs to the KdpC family.</text>
</comment>
<evidence type="ECO:0000255" key="1">
    <source>
        <dbReference type="HAMAP-Rule" id="MF_00276"/>
    </source>
</evidence>
<keyword id="KW-0067">ATP-binding</keyword>
<keyword id="KW-1003">Cell membrane</keyword>
<keyword id="KW-0406">Ion transport</keyword>
<keyword id="KW-0472">Membrane</keyword>
<keyword id="KW-0547">Nucleotide-binding</keyword>
<keyword id="KW-0630">Potassium</keyword>
<keyword id="KW-0633">Potassium transport</keyword>
<keyword id="KW-0812">Transmembrane</keyword>
<keyword id="KW-1133">Transmembrane helix</keyword>
<keyword id="KW-0813">Transport</keyword>
<protein>
    <recommendedName>
        <fullName evidence="1">Potassium-transporting ATPase KdpC subunit</fullName>
    </recommendedName>
    <alternativeName>
        <fullName evidence="1">ATP phosphohydrolase [potassium-transporting] C chain</fullName>
    </alternativeName>
    <alternativeName>
        <fullName evidence="1">Potassium-binding and translocating subunit C</fullName>
    </alternativeName>
    <alternativeName>
        <fullName evidence="1">Potassium-translocating ATPase C chain</fullName>
    </alternativeName>
</protein>
<organism>
    <name type="scientific">Staphylococcus aureus (strain MSSA476)</name>
    <dbReference type="NCBI Taxonomy" id="282459"/>
    <lineage>
        <taxon>Bacteria</taxon>
        <taxon>Bacillati</taxon>
        <taxon>Bacillota</taxon>
        <taxon>Bacilli</taxon>
        <taxon>Bacillales</taxon>
        <taxon>Staphylococcaceae</taxon>
        <taxon>Staphylococcus</taxon>
    </lineage>
</organism>